<evidence type="ECO:0000255" key="1">
    <source>
        <dbReference type="HAMAP-Rule" id="MF_00639"/>
    </source>
</evidence>
<gene>
    <name evidence="1" type="primary">murD</name>
    <name type="ordered locus">BPEN_144</name>
</gene>
<protein>
    <recommendedName>
        <fullName evidence="1">UDP-N-acetylmuramoylalanine--D-glutamate ligase</fullName>
        <ecNumber evidence="1">6.3.2.9</ecNumber>
    </recommendedName>
    <alternativeName>
        <fullName evidence="1">D-glutamic acid-adding enzyme</fullName>
    </alternativeName>
    <alternativeName>
        <fullName evidence="1">UDP-N-acetylmuramoyl-L-alanyl-D-glutamate synthetase</fullName>
    </alternativeName>
</protein>
<keyword id="KW-0067">ATP-binding</keyword>
<keyword id="KW-0131">Cell cycle</keyword>
<keyword id="KW-0132">Cell division</keyword>
<keyword id="KW-0133">Cell shape</keyword>
<keyword id="KW-0961">Cell wall biogenesis/degradation</keyword>
<keyword id="KW-0963">Cytoplasm</keyword>
<keyword id="KW-0436">Ligase</keyword>
<keyword id="KW-0547">Nucleotide-binding</keyword>
<keyword id="KW-0573">Peptidoglycan synthesis</keyword>
<keyword id="KW-1185">Reference proteome</keyword>
<comment type="function">
    <text evidence="1">Cell wall formation. Catalyzes the addition of glutamate to the nucleotide precursor UDP-N-acetylmuramoyl-L-alanine (UMA).</text>
</comment>
<comment type="catalytic activity">
    <reaction evidence="1">
        <text>UDP-N-acetyl-alpha-D-muramoyl-L-alanine + D-glutamate + ATP = UDP-N-acetyl-alpha-D-muramoyl-L-alanyl-D-glutamate + ADP + phosphate + H(+)</text>
        <dbReference type="Rhea" id="RHEA:16429"/>
        <dbReference type="ChEBI" id="CHEBI:15378"/>
        <dbReference type="ChEBI" id="CHEBI:29986"/>
        <dbReference type="ChEBI" id="CHEBI:30616"/>
        <dbReference type="ChEBI" id="CHEBI:43474"/>
        <dbReference type="ChEBI" id="CHEBI:83898"/>
        <dbReference type="ChEBI" id="CHEBI:83900"/>
        <dbReference type="ChEBI" id="CHEBI:456216"/>
        <dbReference type="EC" id="6.3.2.9"/>
    </reaction>
</comment>
<comment type="pathway">
    <text evidence="1">Cell wall biogenesis; peptidoglycan biosynthesis.</text>
</comment>
<comment type="subcellular location">
    <subcellularLocation>
        <location evidence="1">Cytoplasm</location>
    </subcellularLocation>
</comment>
<comment type="similarity">
    <text evidence="1">Belongs to the MurCDEF family.</text>
</comment>
<accession>Q493Q3</accession>
<organism>
    <name type="scientific">Blochmanniella pennsylvanica (strain BPEN)</name>
    <dbReference type="NCBI Taxonomy" id="291272"/>
    <lineage>
        <taxon>Bacteria</taxon>
        <taxon>Pseudomonadati</taxon>
        <taxon>Pseudomonadota</taxon>
        <taxon>Gammaproteobacteria</taxon>
        <taxon>Enterobacterales</taxon>
        <taxon>Enterobacteriaceae</taxon>
        <taxon>ant endosymbionts</taxon>
        <taxon>Candidatus Blochmanniella</taxon>
    </lineage>
</organism>
<dbReference type="EC" id="6.3.2.9" evidence="1"/>
<dbReference type="EMBL" id="CP000016">
    <property type="protein sequence ID" value="AAZ40784.1"/>
    <property type="molecule type" value="Genomic_DNA"/>
</dbReference>
<dbReference type="RefSeq" id="WP_011282691.1">
    <property type="nucleotide sequence ID" value="NC_007292.1"/>
</dbReference>
<dbReference type="SMR" id="Q493Q3"/>
<dbReference type="STRING" id="291272.BPEN_144"/>
<dbReference type="KEGG" id="bpn:BPEN_144"/>
<dbReference type="eggNOG" id="COG0771">
    <property type="taxonomic scope" value="Bacteria"/>
</dbReference>
<dbReference type="HOGENOM" id="CLU_032540_1_0_6"/>
<dbReference type="OrthoDB" id="9809796at2"/>
<dbReference type="UniPathway" id="UPA00219"/>
<dbReference type="Proteomes" id="UP000007794">
    <property type="component" value="Chromosome"/>
</dbReference>
<dbReference type="GO" id="GO:0005737">
    <property type="term" value="C:cytoplasm"/>
    <property type="evidence" value="ECO:0007669"/>
    <property type="project" value="UniProtKB-SubCell"/>
</dbReference>
<dbReference type="GO" id="GO:0005524">
    <property type="term" value="F:ATP binding"/>
    <property type="evidence" value="ECO:0007669"/>
    <property type="project" value="UniProtKB-UniRule"/>
</dbReference>
<dbReference type="GO" id="GO:0008764">
    <property type="term" value="F:UDP-N-acetylmuramoylalanine-D-glutamate ligase activity"/>
    <property type="evidence" value="ECO:0007669"/>
    <property type="project" value="UniProtKB-UniRule"/>
</dbReference>
<dbReference type="GO" id="GO:0051301">
    <property type="term" value="P:cell division"/>
    <property type="evidence" value="ECO:0007669"/>
    <property type="project" value="UniProtKB-KW"/>
</dbReference>
<dbReference type="GO" id="GO:0071555">
    <property type="term" value="P:cell wall organization"/>
    <property type="evidence" value="ECO:0007669"/>
    <property type="project" value="UniProtKB-KW"/>
</dbReference>
<dbReference type="GO" id="GO:0009252">
    <property type="term" value="P:peptidoglycan biosynthetic process"/>
    <property type="evidence" value="ECO:0007669"/>
    <property type="project" value="UniProtKB-UniRule"/>
</dbReference>
<dbReference type="GO" id="GO:0008360">
    <property type="term" value="P:regulation of cell shape"/>
    <property type="evidence" value="ECO:0007669"/>
    <property type="project" value="UniProtKB-KW"/>
</dbReference>
<dbReference type="Gene3D" id="3.90.190.20">
    <property type="entry name" value="Mur ligase, C-terminal domain"/>
    <property type="match status" value="1"/>
</dbReference>
<dbReference type="Gene3D" id="3.40.1190.10">
    <property type="entry name" value="Mur-like, catalytic domain"/>
    <property type="match status" value="1"/>
</dbReference>
<dbReference type="Gene3D" id="3.40.50.720">
    <property type="entry name" value="NAD(P)-binding Rossmann-like Domain"/>
    <property type="match status" value="1"/>
</dbReference>
<dbReference type="HAMAP" id="MF_00639">
    <property type="entry name" value="MurD"/>
    <property type="match status" value="1"/>
</dbReference>
<dbReference type="InterPro" id="IPR036565">
    <property type="entry name" value="Mur-like_cat_sf"/>
</dbReference>
<dbReference type="InterPro" id="IPR004101">
    <property type="entry name" value="Mur_ligase_C"/>
</dbReference>
<dbReference type="InterPro" id="IPR036615">
    <property type="entry name" value="Mur_ligase_C_dom_sf"/>
</dbReference>
<dbReference type="InterPro" id="IPR013221">
    <property type="entry name" value="Mur_ligase_cen"/>
</dbReference>
<dbReference type="InterPro" id="IPR005762">
    <property type="entry name" value="MurD"/>
</dbReference>
<dbReference type="NCBIfam" id="TIGR01087">
    <property type="entry name" value="murD"/>
    <property type="match status" value="1"/>
</dbReference>
<dbReference type="PANTHER" id="PTHR43692">
    <property type="entry name" value="UDP-N-ACETYLMURAMOYLALANINE--D-GLUTAMATE LIGASE"/>
    <property type="match status" value="1"/>
</dbReference>
<dbReference type="PANTHER" id="PTHR43692:SF1">
    <property type="entry name" value="UDP-N-ACETYLMURAMOYLALANINE--D-GLUTAMATE LIGASE"/>
    <property type="match status" value="1"/>
</dbReference>
<dbReference type="Pfam" id="PF02875">
    <property type="entry name" value="Mur_ligase_C"/>
    <property type="match status" value="1"/>
</dbReference>
<dbReference type="Pfam" id="PF08245">
    <property type="entry name" value="Mur_ligase_M"/>
    <property type="match status" value="1"/>
</dbReference>
<dbReference type="Pfam" id="PF21799">
    <property type="entry name" value="MurD-like_N"/>
    <property type="match status" value="1"/>
</dbReference>
<dbReference type="SUPFAM" id="SSF51984">
    <property type="entry name" value="MurCD N-terminal domain"/>
    <property type="match status" value="1"/>
</dbReference>
<dbReference type="SUPFAM" id="SSF53623">
    <property type="entry name" value="MurD-like peptide ligases, catalytic domain"/>
    <property type="match status" value="1"/>
</dbReference>
<dbReference type="SUPFAM" id="SSF53244">
    <property type="entry name" value="MurD-like peptide ligases, peptide-binding domain"/>
    <property type="match status" value="1"/>
</dbReference>
<sequence>MRNYRGSKVVIIGLGITGLSCVNFFLDRGVIPKVIDTRIYPPGIKKIPHVVQCYLGAFNDIWLLSATLIVVSPGVRLDHPVLIEALKLGIEIIGDIELFTREATAPIIAITGSNGKSTVTQLVSRMARIAGWHVGVAGNIGVPVLSLLNKSYQLYILEISSFQLDTTYSLRAIAAAILNVSEDHMDHYPGGLKQYWFSKQRIYKNAKICVMNALDFLTIPIYHEYDYCISFGENEDSADYYLKYYKGHTWIVAYNEYVLNCSEMRINNRINYINALSALALSDIIKIPRSVSLKVLCQFSGLAHRCQLIYKNHGVSWINDSKATNVSATKEAINNLKLCGTLHLILGGDGKLADFSSLKHLIKQHEIHLYCFGKDGLLLTTLGFSDVILTNTMIQAMRIINRRIKAKDIVLLSPACSSLDQFKSFEMRGLIFTCFAREFR</sequence>
<name>MURD_BLOPB</name>
<proteinExistence type="inferred from homology"/>
<reference key="1">
    <citation type="journal article" date="2005" name="Genome Res.">
        <title>Genome sequence of Blochmannia pennsylvanicus indicates parallel evolutionary trends among bacterial mutualists of insects.</title>
        <authorList>
            <person name="Degnan P.H."/>
            <person name="Lazarus A.B."/>
            <person name="Wernegreen J.J."/>
        </authorList>
    </citation>
    <scope>NUCLEOTIDE SEQUENCE [LARGE SCALE GENOMIC DNA]</scope>
    <source>
        <strain>BPEN</strain>
    </source>
</reference>
<feature type="chain" id="PRO_0000257167" description="UDP-N-acetylmuramoylalanine--D-glutamate ligase">
    <location>
        <begin position="1"/>
        <end position="440"/>
    </location>
</feature>
<feature type="binding site" evidence="1">
    <location>
        <begin position="112"/>
        <end position="118"/>
    </location>
    <ligand>
        <name>ATP</name>
        <dbReference type="ChEBI" id="CHEBI:30616"/>
    </ligand>
</feature>